<accession>Q86ZC1</accession>
<reference key="1">
    <citation type="journal article" date="2003" name="Fungal Genet. Biol.">
        <title>A complete inventory of fungal kinesins in representative filamentous ascomycetes.</title>
        <authorList>
            <person name="Schoch C.L."/>
            <person name="Aist J.R."/>
            <person name="Yoder O.C."/>
            <person name="Gillian Turgeon B."/>
        </authorList>
    </citation>
    <scope>NUCLEOTIDE SEQUENCE [GENOMIC DNA]</scope>
</reference>
<organism>
    <name type="scientific">Botryotinia fuckeliana</name>
    <name type="common">Noble rot fungus</name>
    <name type="synonym">Botrytis cinerea</name>
    <dbReference type="NCBI Taxonomy" id="40559"/>
    <lineage>
        <taxon>Eukaryota</taxon>
        <taxon>Fungi</taxon>
        <taxon>Dikarya</taxon>
        <taxon>Ascomycota</taxon>
        <taxon>Pezizomycotina</taxon>
        <taxon>Leotiomycetes</taxon>
        <taxon>Helotiales</taxon>
        <taxon>Sclerotiniaceae</taxon>
        <taxon>Botrytis</taxon>
    </lineage>
</organism>
<feature type="chain" id="PRO_0000125360" description="Kinesin heavy chain">
    <location>
        <begin position="1"/>
        <end position="880"/>
    </location>
</feature>
<feature type="domain" description="Kinesin motor" evidence="2">
    <location>
        <begin position="4"/>
        <end position="327"/>
    </location>
</feature>
<feature type="region of interest" description="Disordered" evidence="3">
    <location>
        <begin position="388"/>
        <end position="426"/>
    </location>
</feature>
<feature type="coiled-coil region" evidence="1">
    <location>
        <begin position="428"/>
        <end position="849"/>
    </location>
</feature>
<feature type="compositionally biased region" description="Polar residues" evidence="3">
    <location>
        <begin position="399"/>
        <end position="408"/>
    </location>
</feature>
<feature type="binding site" evidence="2">
    <location>
        <begin position="85"/>
        <end position="92"/>
    </location>
    <ligand>
        <name>ATP</name>
        <dbReference type="ChEBI" id="CHEBI:30616"/>
    </ligand>
</feature>
<feature type="binding site" evidence="2">
    <location>
        <begin position="235"/>
        <end position="242"/>
    </location>
    <ligand>
        <name>ATP</name>
        <dbReference type="ChEBI" id="CHEBI:30616"/>
    </ligand>
</feature>
<protein>
    <recommendedName>
        <fullName>Kinesin heavy chain</fullName>
    </recommendedName>
</protein>
<evidence type="ECO:0000255" key="1"/>
<evidence type="ECO:0000255" key="2">
    <source>
        <dbReference type="PROSITE-ProRule" id="PRU00283"/>
    </source>
</evidence>
<evidence type="ECO:0000256" key="3">
    <source>
        <dbReference type="SAM" id="MobiDB-lite"/>
    </source>
</evidence>
<evidence type="ECO:0000305" key="4"/>
<name>KINH_BOTFU</name>
<proteinExistence type="inferred from homology"/>
<dbReference type="EMBL" id="AY230415">
    <property type="protein sequence ID" value="AAO59277.1"/>
    <property type="molecule type" value="Genomic_DNA"/>
</dbReference>
<dbReference type="SMR" id="Q86ZC1"/>
<dbReference type="GO" id="GO:0005737">
    <property type="term" value="C:cytoplasm"/>
    <property type="evidence" value="ECO:0007669"/>
    <property type="project" value="UniProtKB-KW"/>
</dbReference>
<dbReference type="GO" id="GO:0005874">
    <property type="term" value="C:microtubule"/>
    <property type="evidence" value="ECO:0007669"/>
    <property type="project" value="UniProtKB-KW"/>
</dbReference>
<dbReference type="GO" id="GO:0005524">
    <property type="term" value="F:ATP binding"/>
    <property type="evidence" value="ECO:0007669"/>
    <property type="project" value="UniProtKB-KW"/>
</dbReference>
<dbReference type="GO" id="GO:0008017">
    <property type="term" value="F:microtubule binding"/>
    <property type="evidence" value="ECO:0007669"/>
    <property type="project" value="InterPro"/>
</dbReference>
<dbReference type="GO" id="GO:0003777">
    <property type="term" value="F:microtubule motor activity"/>
    <property type="evidence" value="ECO:0007669"/>
    <property type="project" value="InterPro"/>
</dbReference>
<dbReference type="GO" id="GO:0007018">
    <property type="term" value="P:microtubule-based movement"/>
    <property type="evidence" value="ECO:0007669"/>
    <property type="project" value="InterPro"/>
</dbReference>
<dbReference type="CDD" id="cd23649">
    <property type="entry name" value="Khc_CBD_cc"/>
    <property type="match status" value="1"/>
</dbReference>
<dbReference type="CDD" id="cd01369">
    <property type="entry name" value="KISc_KHC_KIF5"/>
    <property type="match status" value="1"/>
</dbReference>
<dbReference type="FunFam" id="3.40.850.10:FF:000031">
    <property type="entry name" value="Kinesin-like protein"/>
    <property type="match status" value="1"/>
</dbReference>
<dbReference type="Gene3D" id="3.40.850.10">
    <property type="entry name" value="Kinesin motor domain"/>
    <property type="match status" value="1"/>
</dbReference>
<dbReference type="InterPro" id="IPR027640">
    <property type="entry name" value="Kinesin-like_fam"/>
</dbReference>
<dbReference type="InterPro" id="IPR019821">
    <property type="entry name" value="Kinesin_motor_CS"/>
</dbReference>
<dbReference type="InterPro" id="IPR001752">
    <property type="entry name" value="Kinesin_motor_dom"/>
</dbReference>
<dbReference type="InterPro" id="IPR036961">
    <property type="entry name" value="Kinesin_motor_dom_sf"/>
</dbReference>
<dbReference type="InterPro" id="IPR027417">
    <property type="entry name" value="P-loop_NTPase"/>
</dbReference>
<dbReference type="PANTHER" id="PTHR47968">
    <property type="entry name" value="CENTROMERE PROTEIN E"/>
    <property type="match status" value="1"/>
</dbReference>
<dbReference type="PANTHER" id="PTHR47968:SF75">
    <property type="entry name" value="CENTROMERE-ASSOCIATED PROTEIN E"/>
    <property type="match status" value="1"/>
</dbReference>
<dbReference type="Pfam" id="PF00225">
    <property type="entry name" value="Kinesin"/>
    <property type="match status" value="1"/>
</dbReference>
<dbReference type="PRINTS" id="PR00380">
    <property type="entry name" value="KINESINHEAVY"/>
</dbReference>
<dbReference type="SMART" id="SM00129">
    <property type="entry name" value="KISc"/>
    <property type="match status" value="1"/>
</dbReference>
<dbReference type="SUPFAM" id="SSF52540">
    <property type="entry name" value="P-loop containing nucleoside triphosphate hydrolases"/>
    <property type="match status" value="1"/>
</dbReference>
<dbReference type="PROSITE" id="PS00411">
    <property type="entry name" value="KINESIN_MOTOR_1"/>
    <property type="match status" value="1"/>
</dbReference>
<dbReference type="PROSITE" id="PS50067">
    <property type="entry name" value="KINESIN_MOTOR_2"/>
    <property type="match status" value="1"/>
</dbReference>
<gene>
    <name type="primary">klp1</name>
</gene>
<comment type="function">
    <text>Kinesin is a microtubule-associated force-producing protein that may play a role in organelle transport. Its motor activity is directed toward the microtubule's plus end.</text>
</comment>
<comment type="subcellular location">
    <subcellularLocation>
        <location evidence="4">Cytoplasm</location>
        <location evidence="4">Cytoskeleton</location>
    </subcellularLocation>
</comment>
<comment type="domain">
    <text>Composed of three structural domains: a large globular N-terminal domain which is responsible for the motor activity of kinesin (it hydrolyzes ATP and binds microtubule), a central alpha-helical coiled coil domain that mediates the heavy chain dimerization; and a small globular C-terminal domain which interacts with other proteins (such as the kinesin light chains), vesicles and membranous organelles.</text>
</comment>
<comment type="similarity">
    <text evidence="2">Belongs to the TRAFAC class myosin-kinesin ATPase superfamily. Kinesin family. Kinesin subfamily.</text>
</comment>
<sequence>MSNSIKVVCRFRPQNRIENEQGAQPVVKFEADDTCALDSNGAAGSFTFDRVFGMSSRQKDIFDFSIKPTVDDILNGYNGTVFAYGQTGAGKSYTMMGTNLDNDDGRGVIPRIVEQIFASILSSPGTIEYTVRVSYMEIYMERIRDLLQPQNDNLPIHEEKNRGVYVKGLLEVYVSSVQEVYEVLKRGGDARVVASTNMNAESSRSHSIFVITITQKNVETGSAKSGQLFLVDLAGSEKVGKTGASGQTLEEAKKINKSLSALGMVINNLTDGKSSHIPYRDSKLTRILQESLGGNSRTTLIINCSPSSYNAEETLSTLRFGMRAKAIKNKAKVNAELSPAELKALLRKAQSQVTTFETYVSTLEGEVQLWRKGESVPKEQWAPPLAGVSGAKAAAAQTPRPSTPSRLATESRAETPVAERSATPGIPIDKDEREEFLRRENELQDQITEKETQIAAAEKTLRDTKEELTYLKERDTKVNKDNEKLTSEANEFKMQLERLAFESKEAQITMDSLKEANAELTAELDELKQQLLNVKMSAKESTAALDEKEKRKAEKMAQMMAGFDLGGDVFSENEATIKKVIDHIDSLHEQSSAGEAIPPDEFEELKAKLVETQGIVRQAELSMFGSSSNDANVKRREELEQRLQVLEQEYEDLLERNLGEGDVAEIKERLEKAYSNNQDIKVELVEDLKKEVAQKSAEIEKFKAVNEDLQQRVKSGSASNGTAPGSASGKTVQQQIAEFDVMKKSLMRDLQNRCERVVELEISLDETREQYNNVLRSSNNRAQQKKMAFLERNLEQLTHVQRQLVEQNGSLKKEVAIAERKLIARNERIQSLESLLQDSQEKLTTASHRYGFPLYFRIDFNHTSIALLTFPLDSKPNCQQ</sequence>
<keyword id="KW-0067">ATP-binding</keyword>
<keyword id="KW-0175">Coiled coil</keyword>
<keyword id="KW-0963">Cytoplasm</keyword>
<keyword id="KW-0206">Cytoskeleton</keyword>
<keyword id="KW-0493">Microtubule</keyword>
<keyword id="KW-0505">Motor protein</keyword>
<keyword id="KW-0547">Nucleotide-binding</keyword>